<name>KN14D_ARATH</name>
<gene>
    <name evidence="11" type="primary">KIN14D</name>
    <name evidence="8" type="synonym">ATK5</name>
    <name evidence="13" type="ordered locus">At4g05190</name>
    <name evidence="14" type="ORF">C17L7.110</name>
    <name evidence="15" type="ORF">C6L9.1</name>
</gene>
<accession>F4JGP4</accession>
<accession>Q0WP75</accession>
<accession>Q6NQ77</accession>
<accession>Q9M0X6</accession>
<proteinExistence type="evidence at transcript level"/>
<keyword id="KW-0067">ATP-binding</keyword>
<keyword id="KW-0131">Cell cycle</keyword>
<keyword id="KW-0132">Cell division</keyword>
<keyword id="KW-0175">Coiled coil</keyword>
<keyword id="KW-0963">Cytoplasm</keyword>
<keyword id="KW-0206">Cytoskeleton</keyword>
<keyword id="KW-0493">Microtubule</keyword>
<keyword id="KW-0498">Mitosis</keyword>
<keyword id="KW-0505">Motor protein</keyword>
<keyword id="KW-0547">Nucleotide-binding</keyword>
<keyword id="KW-1185">Reference proteome</keyword>
<dbReference type="EMBL" id="AC012392">
    <property type="status" value="NOT_ANNOTATED_CDS"/>
    <property type="molecule type" value="Genomic_DNA"/>
</dbReference>
<dbReference type="EMBL" id="AL161503">
    <property type="protein sequence ID" value="CAB81061.1"/>
    <property type="status" value="ALT_SEQ"/>
    <property type="molecule type" value="Genomic_DNA"/>
</dbReference>
<dbReference type="EMBL" id="CP002687">
    <property type="protein sequence ID" value="AEE82489.1"/>
    <property type="molecule type" value="Genomic_DNA"/>
</dbReference>
<dbReference type="EMBL" id="BT010582">
    <property type="protein sequence ID" value="AAQ82843.1"/>
    <property type="molecule type" value="mRNA"/>
</dbReference>
<dbReference type="EMBL" id="AK175713">
    <property type="protein sequence ID" value="BAD43476.1"/>
    <property type="molecule type" value="mRNA"/>
</dbReference>
<dbReference type="EMBL" id="AK229204">
    <property type="protein sequence ID" value="BAF01074.1"/>
    <property type="molecule type" value="mRNA"/>
</dbReference>
<dbReference type="PIR" id="C85065">
    <property type="entry name" value="C85065"/>
</dbReference>
<dbReference type="RefSeq" id="NP_001329202.1">
    <property type="nucleotide sequence ID" value="NM_001340542.1"/>
</dbReference>
<dbReference type="RefSeq" id="NP_192428.2">
    <property type="nucleotide sequence ID" value="NM_116758.4"/>
</dbReference>
<dbReference type="SMR" id="F4JGP4"/>
<dbReference type="FunCoup" id="F4JGP4">
    <property type="interactions" value="1983"/>
</dbReference>
<dbReference type="STRING" id="3702.F4JGP4"/>
<dbReference type="iPTMnet" id="F4JGP4"/>
<dbReference type="PaxDb" id="3702-AT4G05190.1"/>
<dbReference type="EnsemblPlants" id="AT4G05190.1">
    <property type="protein sequence ID" value="AT4G05190.1"/>
    <property type="gene ID" value="AT4G05190"/>
</dbReference>
<dbReference type="GeneID" id="825867"/>
<dbReference type="Gramene" id="AT4G05190.1">
    <property type="protein sequence ID" value="AT4G05190.1"/>
    <property type="gene ID" value="AT4G05190"/>
</dbReference>
<dbReference type="KEGG" id="ath:AT4G05190"/>
<dbReference type="Araport" id="AT4G05190"/>
<dbReference type="TAIR" id="AT4G05190">
    <property type="gene designation" value="ATK5"/>
</dbReference>
<dbReference type="eggNOG" id="KOG0239">
    <property type="taxonomic scope" value="Eukaryota"/>
</dbReference>
<dbReference type="HOGENOM" id="CLU_001485_12_2_1"/>
<dbReference type="InParanoid" id="F4JGP4"/>
<dbReference type="OMA" id="MPLRNQN"/>
<dbReference type="CD-CODE" id="33FCD62D">
    <property type="entry name" value="Centrosome"/>
</dbReference>
<dbReference type="PRO" id="PR:F4JGP4"/>
<dbReference type="Proteomes" id="UP000006548">
    <property type="component" value="Chromosome 4"/>
</dbReference>
<dbReference type="ExpressionAtlas" id="F4JGP4">
    <property type="expression patterns" value="baseline and differential"/>
</dbReference>
<dbReference type="GO" id="GO:0005634">
    <property type="term" value="C:nucleus"/>
    <property type="evidence" value="ECO:0007005"/>
    <property type="project" value="TAIR"/>
</dbReference>
<dbReference type="GO" id="GO:0009524">
    <property type="term" value="C:phragmoplast"/>
    <property type="evidence" value="ECO:0007669"/>
    <property type="project" value="UniProtKB-SubCell"/>
</dbReference>
<dbReference type="GO" id="GO:0005876">
    <property type="term" value="C:spindle microtubule"/>
    <property type="evidence" value="ECO:0000314"/>
    <property type="project" value="TAIR"/>
</dbReference>
<dbReference type="GO" id="GO:0005524">
    <property type="term" value="F:ATP binding"/>
    <property type="evidence" value="ECO:0007669"/>
    <property type="project" value="UniProtKB-KW"/>
</dbReference>
<dbReference type="GO" id="GO:0008017">
    <property type="term" value="F:microtubule binding"/>
    <property type="evidence" value="ECO:0007669"/>
    <property type="project" value="InterPro"/>
</dbReference>
<dbReference type="GO" id="GO:0003777">
    <property type="term" value="F:microtubule motor activity"/>
    <property type="evidence" value="ECO:0000315"/>
    <property type="project" value="TAIR"/>
</dbReference>
<dbReference type="GO" id="GO:0051301">
    <property type="term" value="P:cell division"/>
    <property type="evidence" value="ECO:0007669"/>
    <property type="project" value="UniProtKB-KW"/>
</dbReference>
<dbReference type="GO" id="GO:0000226">
    <property type="term" value="P:microtubule cytoskeleton organization"/>
    <property type="evidence" value="ECO:0000315"/>
    <property type="project" value="TAIR"/>
</dbReference>
<dbReference type="GO" id="GO:0007018">
    <property type="term" value="P:microtubule-based movement"/>
    <property type="evidence" value="ECO:0007669"/>
    <property type="project" value="InterPro"/>
</dbReference>
<dbReference type="GO" id="GO:0051225">
    <property type="term" value="P:spindle assembly"/>
    <property type="evidence" value="ECO:0000315"/>
    <property type="project" value="TAIR"/>
</dbReference>
<dbReference type="CDD" id="cd01366">
    <property type="entry name" value="KISc_C_terminal"/>
    <property type="match status" value="1"/>
</dbReference>
<dbReference type="FunFam" id="3.40.850.10:FF:000048">
    <property type="entry name" value="Kinesin-like protein"/>
    <property type="match status" value="1"/>
</dbReference>
<dbReference type="Gene3D" id="3.40.850.10">
    <property type="entry name" value="Kinesin motor domain"/>
    <property type="match status" value="1"/>
</dbReference>
<dbReference type="InterPro" id="IPR027640">
    <property type="entry name" value="Kinesin-like_fam"/>
</dbReference>
<dbReference type="InterPro" id="IPR019821">
    <property type="entry name" value="Kinesin_motor_CS"/>
</dbReference>
<dbReference type="InterPro" id="IPR001752">
    <property type="entry name" value="Kinesin_motor_dom"/>
</dbReference>
<dbReference type="InterPro" id="IPR036961">
    <property type="entry name" value="Kinesin_motor_dom_sf"/>
</dbReference>
<dbReference type="InterPro" id="IPR027417">
    <property type="entry name" value="P-loop_NTPase"/>
</dbReference>
<dbReference type="PANTHER" id="PTHR47972">
    <property type="entry name" value="KINESIN-LIKE PROTEIN KLP-3"/>
    <property type="match status" value="1"/>
</dbReference>
<dbReference type="PANTHER" id="PTHR47972:SF45">
    <property type="entry name" value="PROTEIN CLARET SEGREGATIONAL"/>
    <property type="match status" value="1"/>
</dbReference>
<dbReference type="Pfam" id="PF00225">
    <property type="entry name" value="Kinesin"/>
    <property type="match status" value="1"/>
</dbReference>
<dbReference type="PRINTS" id="PR00380">
    <property type="entry name" value="KINESINHEAVY"/>
</dbReference>
<dbReference type="SMART" id="SM00129">
    <property type="entry name" value="KISc"/>
    <property type="match status" value="1"/>
</dbReference>
<dbReference type="SUPFAM" id="SSF52540">
    <property type="entry name" value="P-loop containing nucleoside triphosphate hydrolases"/>
    <property type="match status" value="1"/>
</dbReference>
<dbReference type="SUPFAM" id="SSF57997">
    <property type="entry name" value="Tropomyosin"/>
    <property type="match status" value="1"/>
</dbReference>
<dbReference type="PROSITE" id="PS00411">
    <property type="entry name" value="KINESIN_MOTOR_1"/>
    <property type="match status" value="1"/>
</dbReference>
<dbReference type="PROSITE" id="PS50067">
    <property type="entry name" value="KINESIN_MOTOR_2"/>
    <property type="match status" value="1"/>
</dbReference>
<evidence type="ECO:0000250" key="1"/>
<evidence type="ECO:0000255" key="2"/>
<evidence type="ECO:0000255" key="3">
    <source>
        <dbReference type="PROSITE-ProRule" id="PRU00283"/>
    </source>
</evidence>
<evidence type="ECO:0000256" key="4">
    <source>
        <dbReference type="SAM" id="MobiDB-lite"/>
    </source>
</evidence>
<evidence type="ECO:0000269" key="5">
    <source>
    </source>
</evidence>
<evidence type="ECO:0000269" key="6">
    <source>
    </source>
</evidence>
<evidence type="ECO:0000269" key="7">
    <source>
    </source>
</evidence>
<evidence type="ECO:0000303" key="8">
    <source>
    </source>
</evidence>
<evidence type="ECO:0000303" key="9">
    <source>
    </source>
</evidence>
<evidence type="ECO:0000303" key="10">
    <source>
    </source>
</evidence>
<evidence type="ECO:0000305" key="11"/>
<evidence type="ECO:0000305" key="12">
    <source>
    </source>
</evidence>
<evidence type="ECO:0000312" key="13">
    <source>
        <dbReference type="Araport" id="AT4G05190"/>
    </source>
</evidence>
<evidence type="ECO:0000312" key="14">
    <source>
        <dbReference type="EMBL" id="AC012392"/>
    </source>
</evidence>
<evidence type="ECO:0000312" key="15">
    <source>
        <dbReference type="EMBL" id="CAB81061.1"/>
    </source>
</evidence>
<comment type="function">
    <text evidence="5 6 7">Kinesin that supports microtubule movement in an ATP-dependent manner and that functions as a minus-end directed motor as well as a plus-end tracking protein. During mitosis, is involved in early spindle assembly. Participates in the capture of antiparallel interpolar microtubules and helps in generating force to coalign microtubules.</text>
</comment>
<comment type="subcellular location">
    <subcellularLocation>
        <location>Cytoplasm</location>
        <location>Cytoskeleton</location>
    </subcellularLocation>
    <subcellularLocation>
        <location>Cytoplasm</location>
        <location>Cytoskeleton</location>
        <location>Phragmoplast</location>
    </subcellularLocation>
    <text>In interphase, is enriched specifically at growing microtubule plus-ends. In dividing cells, accumulates in spindle midzones and phragmoplast leading edges.</text>
</comment>
<comment type="tissue specificity">
    <text evidence="7">Slightly expressed in anther lobes with pollen mother cells at anther stage 5. Strongly expressed at anther stage 6 in the tapetum and meiotic cells. Also detected in the gynoecium and the ovule.</text>
</comment>
<comment type="domain">
    <text evidence="1">Composed of three structural domains; a small globular N-terminal, a central alpha-helical coiled coil and a large globular C-terminal which is responsible for the motor activity (it hydrolyzes ATP and binds microtubules).</text>
</comment>
<comment type="disruption phenotype">
    <text evidence="5 6 7">No visible phenotype under normal growth conditions, but dividing cells of mutant plants exhibit abnormally broadened mitotic spindles in metaphase and anaphase. However, this does not affect chromosome alignment and segregation. Kin14c and kin14d double mutant is gametophytically lethal (PubMed:18088313).</text>
</comment>
<comment type="miscellaneous">
    <text evidence="12">By measuring the velocity of microtubule translocation, the speed of ATK5 was determined to be 6.30 um/min at 20 degrees Celsius.</text>
</comment>
<comment type="similarity">
    <text evidence="9">Belongs to the TRAFAC class myosin-kinesin ATPase superfamily. Kinesin family. KIN-14 subfamily.</text>
</comment>
<comment type="sequence caution" evidence="11">
    <conflict type="erroneous gene model prediction">
        <sequence resource="EMBL-CDS" id="CAB81061"/>
    </conflict>
</comment>
<reference key="1">
    <citation type="journal article" date="1999" name="Nature">
        <title>Sequence and analysis of chromosome 4 of the plant Arabidopsis thaliana.</title>
        <authorList>
            <person name="Mayer K.F.X."/>
            <person name="Schueller C."/>
            <person name="Wambutt R."/>
            <person name="Murphy G."/>
            <person name="Volckaert G."/>
            <person name="Pohl T."/>
            <person name="Duesterhoeft A."/>
            <person name="Stiekema W."/>
            <person name="Entian K.-D."/>
            <person name="Terryn N."/>
            <person name="Harris B."/>
            <person name="Ansorge W."/>
            <person name="Brandt P."/>
            <person name="Grivell L.A."/>
            <person name="Rieger M."/>
            <person name="Weichselgartner M."/>
            <person name="de Simone V."/>
            <person name="Obermaier B."/>
            <person name="Mache R."/>
            <person name="Mueller M."/>
            <person name="Kreis M."/>
            <person name="Delseny M."/>
            <person name="Puigdomenech P."/>
            <person name="Watson M."/>
            <person name="Schmidtheini T."/>
            <person name="Reichert B."/>
            <person name="Portetelle D."/>
            <person name="Perez-Alonso M."/>
            <person name="Boutry M."/>
            <person name="Bancroft I."/>
            <person name="Vos P."/>
            <person name="Hoheisel J."/>
            <person name="Zimmermann W."/>
            <person name="Wedler H."/>
            <person name="Ridley P."/>
            <person name="Langham S.-A."/>
            <person name="McCullagh B."/>
            <person name="Bilham L."/>
            <person name="Robben J."/>
            <person name="van der Schueren J."/>
            <person name="Grymonprez B."/>
            <person name="Chuang Y.-J."/>
            <person name="Vandenbussche F."/>
            <person name="Braeken M."/>
            <person name="Weltjens I."/>
            <person name="Voet M."/>
            <person name="Bastiaens I."/>
            <person name="Aert R."/>
            <person name="Defoor E."/>
            <person name="Weitzenegger T."/>
            <person name="Bothe G."/>
            <person name="Ramsperger U."/>
            <person name="Hilbert H."/>
            <person name="Braun M."/>
            <person name="Holzer E."/>
            <person name="Brandt A."/>
            <person name="Peters S."/>
            <person name="van Staveren M."/>
            <person name="Dirkse W."/>
            <person name="Mooijman P."/>
            <person name="Klein Lankhorst R."/>
            <person name="Rose M."/>
            <person name="Hauf J."/>
            <person name="Koetter P."/>
            <person name="Berneiser S."/>
            <person name="Hempel S."/>
            <person name="Feldpausch M."/>
            <person name="Lamberth S."/>
            <person name="Van den Daele H."/>
            <person name="De Keyser A."/>
            <person name="Buysshaert C."/>
            <person name="Gielen J."/>
            <person name="Villarroel R."/>
            <person name="De Clercq R."/>
            <person name="van Montagu M."/>
            <person name="Rogers J."/>
            <person name="Cronin A."/>
            <person name="Quail M.A."/>
            <person name="Bray-Allen S."/>
            <person name="Clark L."/>
            <person name="Doggett J."/>
            <person name="Hall S."/>
            <person name="Kay M."/>
            <person name="Lennard N."/>
            <person name="McLay K."/>
            <person name="Mayes R."/>
            <person name="Pettett A."/>
            <person name="Rajandream M.A."/>
            <person name="Lyne M."/>
            <person name="Benes V."/>
            <person name="Rechmann S."/>
            <person name="Borkova D."/>
            <person name="Bloecker H."/>
            <person name="Scharfe M."/>
            <person name="Grimm M."/>
            <person name="Loehnert T.-H."/>
            <person name="Dose S."/>
            <person name="de Haan M."/>
            <person name="Maarse A.C."/>
            <person name="Schaefer M."/>
            <person name="Mueller-Auer S."/>
            <person name="Gabel C."/>
            <person name="Fuchs M."/>
            <person name="Fartmann B."/>
            <person name="Granderath K."/>
            <person name="Dauner D."/>
            <person name="Herzl A."/>
            <person name="Neumann S."/>
            <person name="Argiriou A."/>
            <person name="Vitale D."/>
            <person name="Liguori R."/>
            <person name="Piravandi E."/>
            <person name="Massenet O."/>
            <person name="Quigley F."/>
            <person name="Clabauld G."/>
            <person name="Muendlein A."/>
            <person name="Felber R."/>
            <person name="Schnabl S."/>
            <person name="Hiller R."/>
            <person name="Schmidt W."/>
            <person name="Lecharny A."/>
            <person name="Aubourg S."/>
            <person name="Chefdor F."/>
            <person name="Cooke R."/>
            <person name="Berger C."/>
            <person name="Monfort A."/>
            <person name="Casacuberta E."/>
            <person name="Gibbons T."/>
            <person name="Weber N."/>
            <person name="Vandenbol M."/>
            <person name="Bargues M."/>
            <person name="Terol J."/>
            <person name="Torres A."/>
            <person name="Perez-Perez A."/>
            <person name="Purnelle B."/>
            <person name="Bent E."/>
            <person name="Johnson S."/>
            <person name="Tacon D."/>
            <person name="Jesse T."/>
            <person name="Heijnen L."/>
            <person name="Schwarz S."/>
            <person name="Scholler P."/>
            <person name="Heber S."/>
            <person name="Francs P."/>
            <person name="Bielke C."/>
            <person name="Frishman D."/>
            <person name="Haase D."/>
            <person name="Lemcke K."/>
            <person name="Mewes H.-W."/>
            <person name="Stocker S."/>
            <person name="Zaccaria P."/>
            <person name="Bevan M."/>
            <person name="Wilson R.K."/>
            <person name="de la Bastide M."/>
            <person name="Habermann K."/>
            <person name="Parnell L."/>
            <person name="Dedhia N."/>
            <person name="Gnoj L."/>
            <person name="Schutz K."/>
            <person name="Huang E."/>
            <person name="Spiegel L."/>
            <person name="Sekhon M."/>
            <person name="Murray J."/>
            <person name="Sheet P."/>
            <person name="Cordes M."/>
            <person name="Abu-Threideh J."/>
            <person name="Stoneking T."/>
            <person name="Kalicki J."/>
            <person name="Graves T."/>
            <person name="Harmon G."/>
            <person name="Edwards J."/>
            <person name="Latreille P."/>
            <person name="Courtney L."/>
            <person name="Cloud J."/>
            <person name="Abbott A."/>
            <person name="Scott K."/>
            <person name="Johnson D."/>
            <person name="Minx P."/>
            <person name="Bentley D."/>
            <person name="Fulton B."/>
            <person name="Miller N."/>
            <person name="Greco T."/>
            <person name="Kemp K."/>
            <person name="Kramer J."/>
            <person name="Fulton L."/>
            <person name="Mardis E."/>
            <person name="Dante M."/>
            <person name="Pepin K."/>
            <person name="Hillier L.W."/>
            <person name="Nelson J."/>
            <person name="Spieth J."/>
            <person name="Ryan E."/>
            <person name="Andrews S."/>
            <person name="Geisel C."/>
            <person name="Layman D."/>
            <person name="Du H."/>
            <person name="Ali J."/>
            <person name="Berghoff A."/>
            <person name="Jones K."/>
            <person name="Drone K."/>
            <person name="Cotton M."/>
            <person name="Joshu C."/>
            <person name="Antonoiu B."/>
            <person name="Zidanic M."/>
            <person name="Strong C."/>
            <person name="Sun H."/>
            <person name="Lamar B."/>
            <person name="Yordan C."/>
            <person name="Ma P."/>
            <person name="Zhong J."/>
            <person name="Preston R."/>
            <person name="Vil D."/>
            <person name="Shekher M."/>
            <person name="Matero A."/>
            <person name="Shah R."/>
            <person name="Swaby I.K."/>
            <person name="O'Shaughnessy A."/>
            <person name="Rodriguez M."/>
            <person name="Hoffman J."/>
            <person name="Till S."/>
            <person name="Granat S."/>
            <person name="Shohdy N."/>
            <person name="Hasegawa A."/>
            <person name="Hameed A."/>
            <person name="Lodhi M."/>
            <person name="Johnson A."/>
            <person name="Chen E."/>
            <person name="Marra M.A."/>
            <person name="Martienssen R."/>
            <person name="McCombie W.R."/>
        </authorList>
    </citation>
    <scope>NUCLEOTIDE SEQUENCE [LARGE SCALE GENOMIC DNA]</scope>
    <source>
        <strain>cv. Columbia</strain>
    </source>
</reference>
<reference key="2">
    <citation type="journal article" date="2017" name="Plant J.">
        <title>Araport11: a complete reannotation of the Arabidopsis thaliana reference genome.</title>
        <authorList>
            <person name="Cheng C.Y."/>
            <person name="Krishnakumar V."/>
            <person name="Chan A.P."/>
            <person name="Thibaud-Nissen F."/>
            <person name="Schobel S."/>
            <person name="Town C.D."/>
        </authorList>
    </citation>
    <scope>GENOME REANNOTATION</scope>
    <source>
        <strain>cv. Columbia</strain>
    </source>
</reference>
<reference key="3">
    <citation type="submission" date="2003-09" db="EMBL/GenBank/DDBJ databases">
        <title>Arabidopsis ORF clones.</title>
        <authorList>
            <person name="Shinn P."/>
            <person name="Chen H."/>
            <person name="Cheuk R.F."/>
            <person name="Kim C.J."/>
            <person name="Carninci P."/>
            <person name="Hayashizaki Y."/>
            <person name="Ishida J."/>
            <person name="Kamiya A."/>
            <person name="Kawai J."/>
            <person name="Narusaka M."/>
            <person name="Sakurai T."/>
            <person name="Satou M."/>
            <person name="Seki M."/>
            <person name="Shinozaki K."/>
            <person name="Ecker J.R."/>
        </authorList>
    </citation>
    <scope>NUCLEOTIDE SEQUENCE [LARGE SCALE MRNA]</scope>
    <source>
        <strain>cv. Columbia</strain>
    </source>
</reference>
<reference key="4">
    <citation type="submission" date="2004-09" db="EMBL/GenBank/DDBJ databases">
        <title>Large-scale analysis of RIKEN Arabidopsis full-length (RAFL) cDNAs.</title>
        <authorList>
            <person name="Totoki Y."/>
            <person name="Seki M."/>
            <person name="Ishida J."/>
            <person name="Nakajima M."/>
            <person name="Enju A."/>
            <person name="Kamiya A."/>
            <person name="Narusaka M."/>
            <person name="Shin-i T."/>
            <person name="Nakagawa M."/>
            <person name="Sakamoto N."/>
            <person name="Oishi K."/>
            <person name="Kohara Y."/>
            <person name="Kobayashi M."/>
            <person name="Toyoda A."/>
            <person name="Sakaki Y."/>
            <person name="Sakurai T."/>
            <person name="Iida K."/>
            <person name="Akiyama K."/>
            <person name="Satou M."/>
            <person name="Toyoda T."/>
            <person name="Konagaya A."/>
            <person name="Carninci P."/>
            <person name="Kawai J."/>
            <person name="Hayashizaki Y."/>
            <person name="Shinozaki K."/>
        </authorList>
    </citation>
    <scope>NUCLEOTIDE SEQUENCE [LARGE SCALE MRNA]</scope>
    <source>
        <strain>cv. Columbia</strain>
    </source>
</reference>
<reference key="5">
    <citation type="journal article" date="2001" name="BMC Genomics">
        <title>Kinesins in the Arabidopsis genome: a comparative analysis among eukaryotes.</title>
        <authorList>
            <person name="Reddy A.S."/>
            <person name="Day I.S."/>
        </authorList>
    </citation>
    <scope>GENE FAMILY</scope>
</reference>
<reference key="6">
    <citation type="journal article" date="2005" name="Mol. Biol. Cell">
        <title>A minus-end-directed kinesin with plus-end tracking protein activity is involved in spindle morphogenesis.</title>
        <authorList>
            <person name="Ambrose J.C."/>
            <person name="Li W."/>
            <person name="Marcus A."/>
            <person name="Ma H."/>
            <person name="Cyr R."/>
        </authorList>
    </citation>
    <scope>FUNCTION</scope>
    <scope>SUBCELLULAR LOCATION</scope>
    <scope>DISRUPTION PHENOTYPE</scope>
</reference>
<reference key="7">
    <citation type="journal article" date="2006" name="BMC Genomics">
        <title>Comprehensive comparative analysis of kinesins in photosynthetic eukaryotes.</title>
        <authorList>
            <person name="Richardson D.N."/>
            <person name="Simmons M.P."/>
            <person name="Reddy A.S."/>
        </authorList>
    </citation>
    <scope>GENE FAMILY</scope>
    <scope>NOMENCLATURE</scope>
</reference>
<reference key="8">
    <citation type="journal article" date="2007" name="Plant Cell">
        <title>The kinesin ATK5 functions in early spindle assembly in Arabidopsis.</title>
        <authorList>
            <person name="Ambrose J.C."/>
            <person name="Cyr R."/>
        </authorList>
    </citation>
    <scope>FUNCTION</scope>
    <scope>SUBCELLULAR LOCATION</scope>
    <scope>DISRUPTION PHENOTYPE</scope>
</reference>
<reference key="9">
    <citation type="journal article" date="2008" name="Plant J.">
        <title>Functional divergence of the duplicated AtKIN14a and AtKIN14b genes: critical roles in Arabidopsis meiosis and gametophyte development.</title>
        <authorList>
            <person name="Quan L."/>
            <person name="Xiao R."/>
            <person name="Li W."/>
            <person name="Oh S.A."/>
            <person name="Kong H."/>
            <person name="Ambrose J.C."/>
            <person name="Malcos J.L."/>
            <person name="Cyr R."/>
            <person name="Twell D."/>
            <person name="Ma H."/>
        </authorList>
    </citation>
    <scope>FUNCTION</scope>
    <scope>TISSUE SPECIFICITY</scope>
    <scope>DISRUPTION PHENOTYPE</scope>
</reference>
<reference key="10">
    <citation type="journal article" date="2012" name="Protoplasma">
        <title>Functions of the Arabidopsis kinesin superfamily of microtubule-based motor proteins.</title>
        <authorList>
            <person name="Zhu C."/>
            <person name="Dixit R."/>
        </authorList>
    </citation>
    <scope>REVIEW</scope>
</reference>
<sequence length="790" mass="89194">MPLRNQNRAPLPSPNVKKEALSSIPFDKRRKETQGTGRRQVLSTVNRQDANSDVGSTEECGKVEFTKDEVLALLNERAKAGKFDTKGKIEQMTDIIKKLKVCVRWYQQVDETHVQDKENLSSSLQSAEKRYSDKELDAKTKEEELRATITEMKENIESLQEKLSKEKLSKLDAIENHRREKDCRVVAEKLQVSLREELDKVKEEKMAAKQKVTSLEDMYKRLQEYNTSLQQYNTKLQTDLEVAREAHTRAEKEKSSILENLTTLRGHSKSLQDQLASSRVSQDEAVKQKDSLLMEVNNLQSELQQVRDDRDRHVVQSQKLAGEILMYKESVGKSSHELDILIAKSGSLEETCSLQKERIKMLEQELAFAKEKLKMVDLSMSHTMTEFEEQKQCMHELQDRLADTERQLFEGELLRKKLHNTILELKGNIRVFCRVRPLLPDDGGRQEASVIAYPTSTESLGRGIDVVQSGNKHPFTFDKVFDHGASQEEVFFEISQLVQSALDGYKVCIFAYGQTGSGKTYTMMGRPETPEQKGLIPRSLEQIFKTSQSLSTQGWKYKMQVSMLEIYNESIRDLLSTSRTIAIESVRADSSTSGRQYTITHDVNGNTHVSDLTIVDVCSIGQISSLLQQAAQSRSVGKTHMNEQSSRSHFVFTLRISGVNESTEQQVQGVLNLIDLAGSERLSRSGATGDRLKETQAINKSLSALSDVIFALAKKEDHVPFRNSKLTYLLQPCLGGDSKTLMFVNISPDPSSTGESLCSLRFAARVNACEIGIPRRQTSAKLLDSRLSYG</sequence>
<organism>
    <name type="scientific">Arabidopsis thaliana</name>
    <name type="common">Mouse-ear cress</name>
    <dbReference type="NCBI Taxonomy" id="3702"/>
    <lineage>
        <taxon>Eukaryota</taxon>
        <taxon>Viridiplantae</taxon>
        <taxon>Streptophyta</taxon>
        <taxon>Embryophyta</taxon>
        <taxon>Tracheophyta</taxon>
        <taxon>Spermatophyta</taxon>
        <taxon>Magnoliopsida</taxon>
        <taxon>eudicotyledons</taxon>
        <taxon>Gunneridae</taxon>
        <taxon>Pentapetalae</taxon>
        <taxon>rosids</taxon>
        <taxon>malvids</taxon>
        <taxon>Brassicales</taxon>
        <taxon>Brassicaceae</taxon>
        <taxon>Camelineae</taxon>
        <taxon>Arabidopsis</taxon>
    </lineage>
</organism>
<feature type="chain" id="PRO_0000420251" description="Kinesin-like protein KIN-14D">
    <location>
        <begin position="1"/>
        <end position="790"/>
    </location>
</feature>
<feature type="domain" description="Kinesin motor" evidence="3">
    <location>
        <begin position="428"/>
        <end position="769"/>
    </location>
</feature>
<feature type="region of interest" description="Globular">
    <location>
        <begin position="1"/>
        <end position="66"/>
    </location>
</feature>
<feature type="region of interest" description="Disordered" evidence="4">
    <location>
        <begin position="1"/>
        <end position="56"/>
    </location>
</feature>
<feature type="region of interest" description="Disordered" evidence="4">
    <location>
        <begin position="116"/>
        <end position="139"/>
    </location>
</feature>
<feature type="coiled-coil region" evidence="2">
    <location>
        <begin position="117"/>
        <end position="316"/>
    </location>
</feature>
<feature type="coiled-coil region" evidence="2">
    <location>
        <begin position="347"/>
        <end position="426"/>
    </location>
</feature>
<feature type="compositionally biased region" description="Basic and acidic residues" evidence="4">
    <location>
        <begin position="16"/>
        <end position="33"/>
    </location>
</feature>
<feature type="compositionally biased region" description="Polar residues" evidence="4">
    <location>
        <begin position="34"/>
        <end position="55"/>
    </location>
</feature>
<feature type="compositionally biased region" description="Basic and acidic residues" evidence="4">
    <location>
        <begin position="127"/>
        <end position="139"/>
    </location>
</feature>
<feature type="binding site" evidence="3">
    <location>
        <begin position="513"/>
        <end position="520"/>
    </location>
    <ligand>
        <name>ATP</name>
        <dbReference type="ChEBI" id="CHEBI:30616"/>
    </ligand>
</feature>
<feature type="sequence conflict" description="In Ref. 3; AAQ82843 and 4; BAD43476." evidence="11" ref="3 4">
    <original>K</original>
    <variation>E</variation>
    <location>
        <position position="31"/>
    </location>
</feature>
<feature type="sequence conflict" description="In Ref. 3; AAQ82843 and 4; BAD43476." evidence="11" ref="3 4">
    <original>K</original>
    <variation>E</variation>
    <location>
        <position position="739"/>
    </location>
</feature>
<protein>
    <recommendedName>
        <fullName evidence="11">Kinesin-like protein KIN-14D</fullName>
    </recommendedName>
    <alternativeName>
        <fullName evidence="10">AtKIN14b</fullName>
    </alternativeName>
</protein>